<evidence type="ECO:0000250" key="1">
    <source>
        <dbReference type="UniProtKB" id="P68363"/>
    </source>
</evidence>
<evidence type="ECO:0000250" key="2">
    <source>
        <dbReference type="UniProtKB" id="Q13509"/>
    </source>
</evidence>
<evidence type="ECO:0000256" key="3">
    <source>
        <dbReference type="SAM" id="MobiDB-lite"/>
    </source>
</evidence>
<evidence type="ECO:0000305" key="4"/>
<comment type="function">
    <text>Tubulin is the major constituent of microtubules, a cylinder consisting of laterally associated linear protofilaments composed of alpha- and beta-tubulin heterodimers. Microtubules grow by the addition of GTP-tubulin dimers to the microtubule end, where a stabilizing cap forms. Below the cap, tubulin dimers are in GDP-bound state, owing to GTPase activity of alpha-tubulin.</text>
</comment>
<comment type="cofactor">
    <cofactor evidence="1">
        <name>Mg(2+)</name>
        <dbReference type="ChEBI" id="CHEBI:18420"/>
    </cofactor>
</comment>
<comment type="subunit">
    <text>Dimer of alpha and beta chains. A typical microtubule is a hollow water-filled tube with an outer diameter of 25 nm and an inner diameter of 15 nM. Alpha-beta heterodimers associate head-to-tail to form protofilaments running lengthwise along the microtubule wall with the beta-tubulin subunit facing the microtubule plus end conferring a structural polarity. Microtubules usually have 13 protofilaments but different protofilament numbers can be found in some organisms and specialized cells.</text>
</comment>
<comment type="subcellular location">
    <subcellularLocation>
        <location>Cytoplasm</location>
        <location>Cytoskeleton</location>
    </subcellularLocation>
</comment>
<comment type="similarity">
    <text evidence="4">Belongs to the tubulin family.</text>
</comment>
<comment type="caution">
    <text evidence="4">Was originally (Ref.1) thought to originate from Porphyra purpurea.</text>
</comment>
<name>TBB2_OOMCK</name>
<protein>
    <recommendedName>
        <fullName>Tubulin beta-2 chain</fullName>
    </recommendedName>
    <alternativeName>
        <fullName>Beta-2-tubulin</fullName>
    </alternativeName>
</protein>
<gene>
    <name type="primary">TUBB2</name>
</gene>
<keyword id="KW-0963">Cytoplasm</keyword>
<keyword id="KW-0206">Cytoskeleton</keyword>
<keyword id="KW-0342">GTP-binding</keyword>
<keyword id="KW-0460">Magnesium</keyword>
<keyword id="KW-0479">Metal-binding</keyword>
<keyword id="KW-0493">Microtubule</keyword>
<keyword id="KW-0547">Nucleotide-binding</keyword>
<organism>
    <name type="scientific">Oomycete-like sp. (strain MacKay2000)</name>
    <dbReference type="NCBI Taxonomy" id="129195"/>
    <lineage>
        <taxon>Eukaryota</taxon>
        <taxon>Sar</taxon>
        <taxon>Stramenopiles</taxon>
    </lineage>
</organism>
<proteinExistence type="evidence at transcript level"/>
<dbReference type="EMBL" id="Z67992">
    <property type="protein sequence ID" value="CAA91940.1"/>
    <property type="molecule type" value="mRNA"/>
</dbReference>
<dbReference type="SMR" id="P50260"/>
<dbReference type="GO" id="GO:0005737">
    <property type="term" value="C:cytoplasm"/>
    <property type="evidence" value="ECO:0007669"/>
    <property type="project" value="UniProtKB-KW"/>
</dbReference>
<dbReference type="GO" id="GO:0005874">
    <property type="term" value="C:microtubule"/>
    <property type="evidence" value="ECO:0007669"/>
    <property type="project" value="UniProtKB-KW"/>
</dbReference>
<dbReference type="GO" id="GO:0005525">
    <property type="term" value="F:GTP binding"/>
    <property type="evidence" value="ECO:0007669"/>
    <property type="project" value="UniProtKB-KW"/>
</dbReference>
<dbReference type="GO" id="GO:0003924">
    <property type="term" value="F:GTPase activity"/>
    <property type="evidence" value="ECO:0007669"/>
    <property type="project" value="InterPro"/>
</dbReference>
<dbReference type="GO" id="GO:0046872">
    <property type="term" value="F:metal ion binding"/>
    <property type="evidence" value="ECO:0007669"/>
    <property type="project" value="UniProtKB-KW"/>
</dbReference>
<dbReference type="GO" id="GO:0005200">
    <property type="term" value="F:structural constituent of cytoskeleton"/>
    <property type="evidence" value="ECO:0007669"/>
    <property type="project" value="InterPro"/>
</dbReference>
<dbReference type="GO" id="GO:0007017">
    <property type="term" value="P:microtubule-based process"/>
    <property type="evidence" value="ECO:0007669"/>
    <property type="project" value="InterPro"/>
</dbReference>
<dbReference type="CDD" id="cd02187">
    <property type="entry name" value="beta_tubulin"/>
    <property type="match status" value="1"/>
</dbReference>
<dbReference type="FunFam" id="1.10.287.600:FF:000006">
    <property type="entry name" value="Tubulin beta chain"/>
    <property type="match status" value="1"/>
</dbReference>
<dbReference type="FunFam" id="3.30.1330.20:FF:000002">
    <property type="entry name" value="Tubulin beta chain"/>
    <property type="match status" value="1"/>
</dbReference>
<dbReference type="FunFam" id="3.40.50.1440:FF:000006">
    <property type="entry name" value="Tubulin beta chain"/>
    <property type="match status" value="1"/>
</dbReference>
<dbReference type="Gene3D" id="1.10.287.600">
    <property type="entry name" value="Helix hairpin bin"/>
    <property type="match status" value="1"/>
</dbReference>
<dbReference type="Gene3D" id="3.30.1330.20">
    <property type="entry name" value="Tubulin/FtsZ, C-terminal domain"/>
    <property type="match status" value="1"/>
</dbReference>
<dbReference type="Gene3D" id="3.40.50.1440">
    <property type="entry name" value="Tubulin/FtsZ, GTPase domain"/>
    <property type="match status" value="1"/>
</dbReference>
<dbReference type="InterPro" id="IPR002453">
    <property type="entry name" value="Beta_tubulin"/>
</dbReference>
<dbReference type="InterPro" id="IPR008280">
    <property type="entry name" value="Tub_FtsZ_C"/>
</dbReference>
<dbReference type="InterPro" id="IPR000217">
    <property type="entry name" value="Tubulin"/>
</dbReference>
<dbReference type="InterPro" id="IPR037103">
    <property type="entry name" value="Tubulin/FtsZ-like_C"/>
</dbReference>
<dbReference type="InterPro" id="IPR018316">
    <property type="entry name" value="Tubulin/FtsZ_2-layer-sand-dom"/>
</dbReference>
<dbReference type="InterPro" id="IPR036525">
    <property type="entry name" value="Tubulin/FtsZ_GTPase_sf"/>
</dbReference>
<dbReference type="InterPro" id="IPR023123">
    <property type="entry name" value="Tubulin_C"/>
</dbReference>
<dbReference type="InterPro" id="IPR017975">
    <property type="entry name" value="Tubulin_CS"/>
</dbReference>
<dbReference type="InterPro" id="IPR003008">
    <property type="entry name" value="Tubulin_FtsZ_GTPase"/>
</dbReference>
<dbReference type="PANTHER" id="PTHR11588">
    <property type="entry name" value="TUBULIN"/>
    <property type="match status" value="1"/>
</dbReference>
<dbReference type="Pfam" id="PF00091">
    <property type="entry name" value="Tubulin"/>
    <property type="match status" value="1"/>
</dbReference>
<dbReference type="Pfam" id="PF03953">
    <property type="entry name" value="Tubulin_C"/>
    <property type="match status" value="1"/>
</dbReference>
<dbReference type="PRINTS" id="PR01163">
    <property type="entry name" value="BETATUBULIN"/>
</dbReference>
<dbReference type="PRINTS" id="PR01161">
    <property type="entry name" value="TUBULIN"/>
</dbReference>
<dbReference type="SMART" id="SM00864">
    <property type="entry name" value="Tubulin"/>
    <property type="match status" value="1"/>
</dbReference>
<dbReference type="SMART" id="SM00865">
    <property type="entry name" value="Tubulin_C"/>
    <property type="match status" value="1"/>
</dbReference>
<dbReference type="SUPFAM" id="SSF55307">
    <property type="entry name" value="Tubulin C-terminal domain-like"/>
    <property type="match status" value="1"/>
</dbReference>
<dbReference type="SUPFAM" id="SSF52490">
    <property type="entry name" value="Tubulin nucleotide-binding domain-like"/>
    <property type="match status" value="1"/>
</dbReference>
<dbReference type="PROSITE" id="PS00227">
    <property type="entry name" value="TUBULIN"/>
    <property type="match status" value="1"/>
</dbReference>
<sequence>DEHGVDPTGTYHGDSDLQLERINVYYNEATGGRYVPRAILMDLEPGTMDSVRAGPFGQLFRPDNFVFGQTGAGNNWAKGHYTEGAELIDSVLDVVRKEAESCDCLQGFQITHSLGGGTGSGMGTLLISKIREEYPDRVMLTFSVCPSPKVSDTVVEPYNATLSVHQLVENADEVMVLDNEALYDICFRTLKLTTPTYGDLNHLVCACMSGVTSCLRFPGQLNSDLRKLAVNLIPFPRLHFFMIGFAPLTSRGSQQYRALTVPELTQQQFDAKNMMCAADPRHGRYLTASCMFRGRMSTKEVDEQMLNVQNKNSSYFVEWIPNNIKSSVCDIPPKGLKMSACFIGNSTAIQEMFKRIGEQFTAMFRRKAFLHWYTGEGMDEMEFTEAESNMNDLVSEYQQYQDATAEEEGEYDEDEDDEGGDYA</sequence>
<feature type="chain" id="PRO_0000048376" description="Tubulin beta-2 chain">
    <location>
        <begin position="1" status="less than"/>
        <end position="423"/>
    </location>
</feature>
<feature type="region of interest" description="Disordered" evidence="3">
    <location>
        <begin position="394"/>
        <end position="423"/>
    </location>
</feature>
<feature type="compositionally biased region" description="Acidic residues" evidence="3">
    <location>
        <begin position="404"/>
        <end position="423"/>
    </location>
</feature>
<feature type="binding site" evidence="1">
    <location>
        <position position="44"/>
    </location>
    <ligand>
        <name>GTP</name>
        <dbReference type="ChEBI" id="CHEBI:37565"/>
    </ligand>
</feature>
<feature type="binding site" evidence="1">
    <location>
        <position position="44"/>
    </location>
    <ligand>
        <name>Mg(2+)</name>
        <dbReference type="ChEBI" id="CHEBI:18420"/>
    </ligand>
</feature>
<feature type="binding site" evidence="2">
    <location>
        <position position="113"/>
    </location>
    <ligand>
        <name>GTP</name>
        <dbReference type="ChEBI" id="CHEBI:37565"/>
    </ligand>
</feature>
<feature type="binding site" evidence="2">
    <location>
        <position position="117"/>
    </location>
    <ligand>
        <name>GTP</name>
        <dbReference type="ChEBI" id="CHEBI:37565"/>
    </ligand>
</feature>
<feature type="binding site" evidence="2">
    <location>
        <position position="118"/>
    </location>
    <ligand>
        <name>GTP</name>
        <dbReference type="ChEBI" id="CHEBI:37565"/>
    </ligand>
</feature>
<feature type="binding site" evidence="2">
    <location>
        <position position="119"/>
    </location>
    <ligand>
        <name>GTP</name>
        <dbReference type="ChEBI" id="CHEBI:37565"/>
    </ligand>
</feature>
<feature type="binding site" evidence="2">
    <location>
        <position position="179"/>
    </location>
    <ligand>
        <name>GTP</name>
        <dbReference type="ChEBI" id="CHEBI:37565"/>
    </ligand>
</feature>
<feature type="binding site" evidence="2">
    <location>
        <position position="201"/>
    </location>
    <ligand>
        <name>GTP</name>
        <dbReference type="ChEBI" id="CHEBI:37565"/>
    </ligand>
</feature>
<feature type="non-terminal residue">
    <location>
        <position position="1"/>
    </location>
</feature>
<accession>P50260</accession>
<reference key="1">
    <citation type="submission" date="1995-11" db="EMBL/GenBank/DDBJ databases">
        <title>Expression of beta-tubulin genes in the sporophyte and gametophyte of the red alga Porphyra purpurea.</title>
        <authorList>
            <person name="Mackay R.M."/>
            <person name="Gallant J.W."/>
        </authorList>
    </citation>
    <scope>NUCLEOTIDE SEQUENCE [MRNA]</scope>
</reference>
<reference key="2">
    <citation type="journal article" date="1998" name="J. Eukaryot. Microbiol.">
        <title>The phylogenetic position of alpha- and beta-tubulins from the Chlorarachnion host and Cercomonas (Cercozoa).</title>
        <authorList>
            <person name="Keeling P.J."/>
            <person name="Deane J.A."/>
            <person name="McFadden G.I."/>
        </authorList>
    </citation>
    <scope>REVISES SPECIES OF ORIGIN</scope>
</reference>